<name>DC1I2_HUMAN</name>
<dbReference type="EMBL" id="AF134477">
    <property type="protein sequence ID" value="AAP97254.1"/>
    <property type="molecule type" value="mRNA"/>
</dbReference>
<dbReference type="EMBL" id="AF250307">
    <property type="protein sequence ID" value="AAK37426.1"/>
    <property type="molecule type" value="mRNA"/>
</dbReference>
<dbReference type="EMBL" id="AY037160">
    <property type="protein sequence ID" value="AAK67638.1"/>
    <property type="molecule type" value="mRNA"/>
</dbReference>
<dbReference type="EMBL" id="BT007130">
    <property type="protein sequence ID" value="AAP35794.1"/>
    <property type="molecule type" value="mRNA"/>
</dbReference>
<dbReference type="EMBL" id="AK055491">
    <property type="protein sequence ID" value="BAB70932.1"/>
    <property type="molecule type" value="mRNA"/>
</dbReference>
<dbReference type="EMBL" id="AK316119">
    <property type="protein sequence ID" value="BAH14490.1"/>
    <property type="molecule type" value="mRNA"/>
</dbReference>
<dbReference type="EMBL" id="AL137519">
    <property type="protein sequence ID" value="CAB70785.1"/>
    <property type="molecule type" value="mRNA"/>
</dbReference>
<dbReference type="EMBL" id="BX537412">
    <property type="protein sequence ID" value="CAD97654.1"/>
    <property type="molecule type" value="mRNA"/>
</dbReference>
<dbReference type="EMBL" id="AC064826">
    <property type="status" value="NOT_ANNOTATED_CDS"/>
    <property type="molecule type" value="Genomic_DNA"/>
</dbReference>
<dbReference type="EMBL" id="AC068039">
    <property type="protein sequence ID" value="AAY24133.1"/>
    <property type="molecule type" value="Genomic_DNA"/>
</dbReference>
<dbReference type="EMBL" id="CH471058">
    <property type="protein sequence ID" value="EAX11202.1"/>
    <property type="molecule type" value="Genomic_DNA"/>
</dbReference>
<dbReference type="EMBL" id="CH471058">
    <property type="protein sequence ID" value="EAX11204.1"/>
    <property type="molecule type" value="Genomic_DNA"/>
</dbReference>
<dbReference type="EMBL" id="CH471058">
    <property type="protein sequence ID" value="EAX11206.1"/>
    <property type="molecule type" value="Genomic_DNA"/>
</dbReference>
<dbReference type="EMBL" id="CH471058">
    <property type="protein sequence ID" value="EAX11207.1"/>
    <property type="molecule type" value="Genomic_DNA"/>
</dbReference>
<dbReference type="EMBL" id="CH471058">
    <property type="protein sequence ID" value="EAX11208.1"/>
    <property type="molecule type" value="Genomic_DNA"/>
</dbReference>
<dbReference type="EMBL" id="CH471058">
    <property type="protein sequence ID" value="EAX11209.1"/>
    <property type="molecule type" value="Genomic_DNA"/>
</dbReference>
<dbReference type="EMBL" id="BC091498">
    <property type="protein sequence ID" value="AAH91498.1"/>
    <property type="molecule type" value="mRNA"/>
</dbReference>
<dbReference type="EMBL" id="BC109375">
    <property type="protein sequence ID" value="AAI09376.1"/>
    <property type="molecule type" value="mRNA"/>
</dbReference>
<dbReference type="EMBL" id="BC015038">
    <property type="protein sequence ID" value="AAH15038.1"/>
    <property type="molecule type" value="mRNA"/>
</dbReference>
<dbReference type="EMBL" id="U39575">
    <property type="protein sequence ID" value="AAA89166.1"/>
    <property type="status" value="ALT_SEQ"/>
    <property type="molecule type" value="mRNA"/>
</dbReference>
<dbReference type="CCDS" id="CCDS46450.1">
    <molecule id="Q13409-1"/>
</dbReference>
<dbReference type="CCDS" id="CCDS63054.1">
    <molecule id="Q13409-7"/>
</dbReference>
<dbReference type="CCDS" id="CCDS63056.1">
    <molecule id="Q13409-3"/>
</dbReference>
<dbReference type="CCDS" id="CCDS63057.1">
    <molecule id="Q13409-6"/>
</dbReference>
<dbReference type="CCDS" id="CCDS82533.1">
    <molecule id="Q13409-2"/>
</dbReference>
<dbReference type="PIR" id="T46365">
    <property type="entry name" value="T46365"/>
</dbReference>
<dbReference type="RefSeq" id="NP_001258714.1">
    <molecule id="Q13409-1"/>
    <property type="nucleotide sequence ID" value="NM_001271785.2"/>
</dbReference>
<dbReference type="RefSeq" id="NP_001258715.1">
    <molecule id="Q13409-7"/>
    <property type="nucleotide sequence ID" value="NM_001271786.2"/>
</dbReference>
<dbReference type="RefSeq" id="NP_001258716.1">
    <molecule id="Q13409-7"/>
    <property type="nucleotide sequence ID" value="NM_001271787.2"/>
</dbReference>
<dbReference type="RefSeq" id="NP_001258717.1">
    <molecule id="Q13409-3"/>
    <property type="nucleotide sequence ID" value="NM_001271788.2"/>
</dbReference>
<dbReference type="RefSeq" id="NP_001258718.1">
    <molecule id="Q13409-3"/>
    <property type="nucleotide sequence ID" value="NM_001271789.2"/>
</dbReference>
<dbReference type="RefSeq" id="NP_001258719.1">
    <molecule id="Q13409-6"/>
    <property type="nucleotide sequence ID" value="NM_001271790.2"/>
</dbReference>
<dbReference type="RefSeq" id="NP_001307811.1">
    <molecule id="Q13409-2"/>
    <property type="nucleotide sequence ID" value="NM_001320882.2"/>
</dbReference>
<dbReference type="RefSeq" id="NP_001307812.1">
    <molecule id="Q13409-2"/>
    <property type="nucleotide sequence ID" value="NM_001320883.2"/>
</dbReference>
<dbReference type="RefSeq" id="NP_001307813.1">
    <molecule id="Q13409-6"/>
    <property type="nucleotide sequence ID" value="NM_001320884.2"/>
</dbReference>
<dbReference type="RefSeq" id="NP_001369.1">
    <molecule id="Q13409-1"/>
    <property type="nucleotide sequence ID" value="NM_001378.3"/>
</dbReference>
<dbReference type="PDB" id="5JPW">
    <property type="method" value="NMR"/>
    <property type="chains" value="A/B=134-154"/>
</dbReference>
<dbReference type="PDB" id="6F1T">
    <property type="method" value="EM"/>
    <property type="resolution" value="3.50 A"/>
    <property type="chains" value="g/h/o/p=1-638"/>
</dbReference>
<dbReference type="PDB" id="6F1U">
    <property type="method" value="EM"/>
    <property type="resolution" value="3.40 A"/>
    <property type="chains" value="h=1-638"/>
</dbReference>
<dbReference type="PDB" id="6F1Z">
    <property type="method" value="EM"/>
    <property type="resolution" value="3.40 A"/>
    <property type="chains" value="o/p=1-638"/>
</dbReference>
<dbReference type="PDB" id="6F38">
    <property type="method" value="EM"/>
    <property type="resolution" value="6.70 A"/>
    <property type="chains" value="g/h/o/p=1-638"/>
</dbReference>
<dbReference type="PDB" id="6F3A">
    <property type="method" value="EM"/>
    <property type="resolution" value="8.20 A"/>
    <property type="chains" value="g/h=1-638"/>
</dbReference>
<dbReference type="PDB" id="7Z8F">
    <property type="method" value="EM"/>
    <property type="resolution" value="20.00 A"/>
    <property type="chains" value="g/h/o/p=1-638"/>
</dbReference>
<dbReference type="PDB" id="7Z8I">
    <property type="method" value="EM"/>
    <property type="resolution" value="3.30 A"/>
    <property type="chains" value="h/o=1-638"/>
</dbReference>
<dbReference type="PDB" id="7Z8J">
    <property type="method" value="EM"/>
    <property type="resolution" value="3.93 A"/>
    <property type="chains" value="h/o=1-638"/>
</dbReference>
<dbReference type="PDB" id="7Z8K">
    <property type="method" value="EM"/>
    <property type="resolution" value="4.37 A"/>
    <property type="chains" value="h=72-638"/>
</dbReference>
<dbReference type="PDB" id="8PQW">
    <property type="method" value="EM"/>
    <property type="resolution" value="4.20 A"/>
    <property type="chains" value="H/I=1-638"/>
</dbReference>
<dbReference type="PDB" id="8PQZ">
    <property type="method" value="EM"/>
    <property type="resolution" value="5.50 A"/>
    <property type="chains" value="H/I=1-638"/>
</dbReference>
<dbReference type="PDB" id="8PR0">
    <property type="method" value="EM"/>
    <property type="resolution" value="9.40 A"/>
    <property type="chains" value="C/D=1-638"/>
</dbReference>
<dbReference type="PDB" id="8PR1">
    <property type="method" value="EM"/>
    <property type="resolution" value="8.20 A"/>
    <property type="chains" value="I/J=1-638"/>
</dbReference>
<dbReference type="PDB" id="8PR2">
    <property type="method" value="EM"/>
    <property type="resolution" value="3.80 A"/>
    <property type="chains" value="h=1-638"/>
</dbReference>
<dbReference type="PDB" id="8PR3">
    <property type="method" value="EM"/>
    <property type="resolution" value="3.90 A"/>
    <property type="chains" value="h/o=1-638"/>
</dbReference>
<dbReference type="PDB" id="8PTK">
    <property type="method" value="EM"/>
    <property type="resolution" value="10.00 A"/>
    <property type="chains" value="g/h/o/p=1-638"/>
</dbReference>
<dbReference type="PDBsum" id="5JPW"/>
<dbReference type="PDBsum" id="6F1T"/>
<dbReference type="PDBsum" id="6F1U"/>
<dbReference type="PDBsum" id="6F1Z"/>
<dbReference type="PDBsum" id="6F38"/>
<dbReference type="PDBsum" id="6F3A"/>
<dbReference type="PDBsum" id="7Z8F"/>
<dbReference type="PDBsum" id="7Z8I"/>
<dbReference type="PDBsum" id="7Z8J"/>
<dbReference type="PDBsum" id="7Z8K"/>
<dbReference type="PDBsum" id="8PQW"/>
<dbReference type="PDBsum" id="8PQZ"/>
<dbReference type="PDBsum" id="8PR0"/>
<dbReference type="PDBsum" id="8PR1"/>
<dbReference type="PDBsum" id="8PR2"/>
<dbReference type="PDBsum" id="8PR3"/>
<dbReference type="PDBsum" id="8PTK"/>
<dbReference type="EMDB" id="EMD-14549"/>
<dbReference type="EMDB" id="EMD-14552"/>
<dbReference type="EMDB" id="EMD-14553"/>
<dbReference type="EMDB" id="EMD-14555"/>
<dbReference type="EMDB" id="EMD-17826"/>
<dbReference type="EMDB" id="EMD-17829"/>
<dbReference type="EMDB" id="EMD-17830"/>
<dbReference type="EMDB" id="EMD-17831"/>
<dbReference type="EMDB" id="EMD-17832"/>
<dbReference type="EMDB" id="EMD-17833"/>
<dbReference type="EMDB" id="EMD-17873"/>
<dbReference type="EMDB" id="EMD-4168"/>
<dbReference type="EMDB" id="EMD-4169"/>
<dbReference type="EMDB" id="EMD-4172"/>
<dbReference type="EMDB" id="EMD-4177"/>
<dbReference type="SMR" id="Q13409"/>
<dbReference type="BioGRID" id="108119">
    <property type="interactions" value="310"/>
</dbReference>
<dbReference type="ComplexPortal" id="CPX-5025">
    <property type="entry name" value="Cytoplasmic dynein complex, variant 1"/>
</dbReference>
<dbReference type="ELM" id="Q13409"/>
<dbReference type="FunCoup" id="Q13409">
    <property type="interactions" value="2247"/>
</dbReference>
<dbReference type="IntAct" id="Q13409">
    <property type="interactions" value="66"/>
</dbReference>
<dbReference type="MINT" id="Q13409"/>
<dbReference type="STRING" id="9606.ENSP00000380308"/>
<dbReference type="ChEMBL" id="CHEMBL4295815"/>
<dbReference type="GlyCosmos" id="Q13409">
    <property type="glycosylation" value="1 site, 1 glycan"/>
</dbReference>
<dbReference type="GlyGen" id="Q13409">
    <property type="glycosylation" value="1 site, 1 O-linked glycan (1 site)"/>
</dbReference>
<dbReference type="iPTMnet" id="Q13409"/>
<dbReference type="PhosphoSitePlus" id="Q13409"/>
<dbReference type="SwissPalm" id="Q13409"/>
<dbReference type="BioMuta" id="DYNC1I2"/>
<dbReference type="DMDM" id="23503058"/>
<dbReference type="REPRODUCTION-2DPAGE" id="IPI00827813"/>
<dbReference type="jPOST" id="Q13409"/>
<dbReference type="MassIVE" id="Q13409"/>
<dbReference type="PaxDb" id="9606-ENSP00000380308"/>
<dbReference type="PeptideAtlas" id="Q13409"/>
<dbReference type="ProteomicsDB" id="59388">
    <molecule id="Q13409-1"/>
</dbReference>
<dbReference type="ProteomicsDB" id="59389">
    <molecule id="Q13409-2"/>
</dbReference>
<dbReference type="ProteomicsDB" id="59390">
    <molecule id="Q13409-3"/>
</dbReference>
<dbReference type="ProteomicsDB" id="59391">
    <molecule id="Q13409-5"/>
</dbReference>
<dbReference type="ProteomicsDB" id="59392">
    <molecule id="Q13409-6"/>
</dbReference>
<dbReference type="ProteomicsDB" id="7048"/>
<dbReference type="Pumba" id="Q13409"/>
<dbReference type="Antibodypedia" id="33847">
    <property type="antibodies" value="145 antibodies from 30 providers"/>
</dbReference>
<dbReference type="DNASU" id="1781"/>
<dbReference type="Ensembl" id="ENST00000340296.8">
    <molecule id="Q13409-3"/>
    <property type="protein sequence ID" value="ENSP00000339430.4"/>
    <property type="gene ID" value="ENSG00000077380.16"/>
</dbReference>
<dbReference type="Ensembl" id="ENST00000397119.8">
    <molecule id="Q13409-1"/>
    <property type="protein sequence ID" value="ENSP00000380308.3"/>
    <property type="gene ID" value="ENSG00000077380.16"/>
</dbReference>
<dbReference type="Ensembl" id="ENST00000409197.5">
    <molecule id="Q13409-3"/>
    <property type="protein sequence ID" value="ENSP00000386397.1"/>
    <property type="gene ID" value="ENSG00000077380.16"/>
</dbReference>
<dbReference type="Ensembl" id="ENST00000409317.5">
    <molecule id="Q13409-2"/>
    <property type="protein sequence ID" value="ENSP00000386591.1"/>
    <property type="gene ID" value="ENSG00000077380.16"/>
</dbReference>
<dbReference type="Ensembl" id="ENST00000409453.5">
    <molecule id="Q13409-5"/>
    <property type="protein sequence ID" value="ENSP00000386886.1"/>
    <property type="gene ID" value="ENSG00000077380.16"/>
</dbReference>
<dbReference type="Ensembl" id="ENST00000409773.5">
    <molecule id="Q13409-1"/>
    <property type="protein sequence ID" value="ENSP00000386415.1"/>
    <property type="gene ID" value="ENSG00000077380.16"/>
</dbReference>
<dbReference type="Ensembl" id="ENST00000410079.7">
    <molecule id="Q13409-7"/>
    <property type="protein sequence ID" value="ENSP00000386522.3"/>
    <property type="gene ID" value="ENSG00000077380.16"/>
</dbReference>
<dbReference type="Ensembl" id="ENST00000508530.5">
    <molecule id="Q13409-6"/>
    <property type="protein sequence ID" value="ENSP00000423339.1"/>
    <property type="gene ID" value="ENSG00000077380.16"/>
</dbReference>
<dbReference type="Ensembl" id="ENST00000709730.1">
    <molecule id="Q13409-3"/>
    <property type="protein sequence ID" value="ENSP00000517843.1"/>
    <property type="gene ID" value="ENSG00000292102.1"/>
</dbReference>
<dbReference type="Ensembl" id="ENST00000709731.1">
    <molecule id="Q13409-1"/>
    <property type="protein sequence ID" value="ENSP00000517844.1"/>
    <property type="gene ID" value="ENSG00000292102.1"/>
</dbReference>
<dbReference type="Ensembl" id="ENST00000709732.1">
    <molecule id="Q13409-7"/>
    <property type="protein sequence ID" value="ENSP00000517845.1"/>
    <property type="gene ID" value="ENSG00000292102.1"/>
</dbReference>
<dbReference type="Ensembl" id="ENST00000709735.1">
    <molecule id="Q13409-6"/>
    <property type="protein sequence ID" value="ENSP00000517847.1"/>
    <property type="gene ID" value="ENSG00000292102.1"/>
</dbReference>
<dbReference type="Ensembl" id="ENST00000709736.1">
    <molecule id="Q13409-3"/>
    <property type="protein sequence ID" value="ENSP00000517848.1"/>
    <property type="gene ID" value="ENSG00000292102.1"/>
</dbReference>
<dbReference type="Ensembl" id="ENST00000709738.1">
    <molecule id="Q13409-2"/>
    <property type="protein sequence ID" value="ENSP00000517850.1"/>
    <property type="gene ID" value="ENSG00000292102.1"/>
</dbReference>
<dbReference type="Ensembl" id="ENST00000709739.1">
    <molecule id="Q13409-1"/>
    <property type="protein sequence ID" value="ENSP00000517851.1"/>
    <property type="gene ID" value="ENSG00000292102.1"/>
</dbReference>
<dbReference type="Ensembl" id="ENST00000709741.1">
    <molecule id="Q13409-5"/>
    <property type="protein sequence ID" value="ENSP00000517853.1"/>
    <property type="gene ID" value="ENSG00000292102.1"/>
</dbReference>
<dbReference type="GeneID" id="1781"/>
<dbReference type="KEGG" id="hsa:1781"/>
<dbReference type="MANE-Select" id="ENST00000397119.8">
    <property type="protein sequence ID" value="ENSP00000380308.3"/>
    <property type="RefSeq nucleotide sequence ID" value="NM_001378.3"/>
    <property type="RefSeq protein sequence ID" value="NP_001369.1"/>
</dbReference>
<dbReference type="UCSC" id="uc002uha.3">
    <molecule id="Q13409-1"/>
    <property type="organism name" value="human"/>
</dbReference>
<dbReference type="AGR" id="HGNC:2964"/>
<dbReference type="CTD" id="1781"/>
<dbReference type="DisGeNET" id="1781"/>
<dbReference type="GeneCards" id="DYNC1I2"/>
<dbReference type="HGNC" id="HGNC:2964">
    <property type="gene designation" value="DYNC1I2"/>
</dbReference>
<dbReference type="HPA" id="ENSG00000077380">
    <property type="expression patterns" value="Low tissue specificity"/>
</dbReference>
<dbReference type="MalaCards" id="DYNC1I2"/>
<dbReference type="MIM" id="603331">
    <property type="type" value="gene"/>
</dbReference>
<dbReference type="MIM" id="618492">
    <property type="type" value="phenotype"/>
</dbReference>
<dbReference type="neXtProt" id="NX_Q13409"/>
<dbReference type="OpenTargets" id="ENSG00000077380"/>
<dbReference type="PharmGKB" id="PA27435"/>
<dbReference type="VEuPathDB" id="HostDB:ENSG00000077380"/>
<dbReference type="eggNOG" id="KOG1587">
    <property type="taxonomic scope" value="Eukaryota"/>
</dbReference>
<dbReference type="GeneTree" id="ENSGT00940000155442"/>
<dbReference type="HOGENOM" id="CLU_012999_1_1_1"/>
<dbReference type="InParanoid" id="Q13409"/>
<dbReference type="OMA" id="MHDRPEY"/>
<dbReference type="OrthoDB" id="4189at2759"/>
<dbReference type="PAN-GO" id="Q13409">
    <property type="GO annotations" value="4 GO annotations based on evolutionary models"/>
</dbReference>
<dbReference type="PhylomeDB" id="Q13409"/>
<dbReference type="TreeFam" id="TF300553"/>
<dbReference type="PathwayCommons" id="Q13409"/>
<dbReference type="Reactome" id="R-HSA-141444">
    <property type="pathway name" value="Amplification of signal from unattached kinetochores via a MAD2 inhibitory signal"/>
</dbReference>
<dbReference type="Reactome" id="R-HSA-2132295">
    <property type="pathway name" value="MHC class II antigen presentation"/>
</dbReference>
<dbReference type="Reactome" id="R-HSA-2467813">
    <property type="pathway name" value="Separation of Sister Chromatids"/>
</dbReference>
<dbReference type="Reactome" id="R-HSA-2500257">
    <property type="pathway name" value="Resolution of Sister Chromatid Cohesion"/>
</dbReference>
<dbReference type="Reactome" id="R-HSA-2565942">
    <property type="pathway name" value="Regulation of PLK1 Activity at G2/M Transition"/>
</dbReference>
<dbReference type="Reactome" id="R-HSA-3371497">
    <property type="pathway name" value="HSP90 chaperone cycle for steroid hormone receptors (SHR) in the presence of ligand"/>
</dbReference>
<dbReference type="Reactome" id="R-HSA-380259">
    <property type="pathway name" value="Loss of Nlp from mitotic centrosomes"/>
</dbReference>
<dbReference type="Reactome" id="R-HSA-380270">
    <property type="pathway name" value="Recruitment of mitotic centrosome proteins and complexes"/>
</dbReference>
<dbReference type="Reactome" id="R-HSA-380284">
    <property type="pathway name" value="Loss of proteins required for interphase microtubule organization from the centrosome"/>
</dbReference>
<dbReference type="Reactome" id="R-HSA-380320">
    <property type="pathway name" value="Recruitment of NuMA to mitotic centrosomes"/>
</dbReference>
<dbReference type="Reactome" id="R-HSA-5620912">
    <property type="pathway name" value="Anchoring of the basal body to the plasma membrane"/>
</dbReference>
<dbReference type="Reactome" id="R-HSA-5663220">
    <property type="pathway name" value="RHO GTPases Activate Formins"/>
</dbReference>
<dbReference type="Reactome" id="R-HSA-6807878">
    <property type="pathway name" value="COPI-mediated anterograde transport"/>
</dbReference>
<dbReference type="Reactome" id="R-HSA-6811436">
    <property type="pathway name" value="COPI-independent Golgi-to-ER retrograde traffic"/>
</dbReference>
<dbReference type="Reactome" id="R-HSA-68877">
    <property type="pathway name" value="Mitotic Prometaphase"/>
</dbReference>
<dbReference type="Reactome" id="R-HSA-8854518">
    <property type="pathway name" value="AURKA Activation by TPX2"/>
</dbReference>
<dbReference type="Reactome" id="R-HSA-9609690">
    <property type="pathway name" value="HCMV Early Events"/>
</dbReference>
<dbReference type="Reactome" id="R-HSA-9646399">
    <property type="pathway name" value="Aggrephagy"/>
</dbReference>
<dbReference type="Reactome" id="R-HSA-9648025">
    <property type="pathway name" value="EML4 and NUDC in mitotic spindle formation"/>
</dbReference>
<dbReference type="SignaLink" id="Q13409"/>
<dbReference type="SIGNOR" id="Q13409"/>
<dbReference type="BioGRID-ORCS" id="1781">
    <property type="hits" value="794 hits in 1165 CRISPR screens"/>
</dbReference>
<dbReference type="CD-CODE" id="8C2F96ED">
    <property type="entry name" value="Centrosome"/>
</dbReference>
<dbReference type="CD-CODE" id="FB4E32DD">
    <property type="entry name" value="Presynaptic clusters and postsynaptic densities"/>
</dbReference>
<dbReference type="ChiTaRS" id="DYNC1I2">
    <property type="organism name" value="human"/>
</dbReference>
<dbReference type="GeneWiki" id="DYNC1I2"/>
<dbReference type="GenomeRNAi" id="1781"/>
<dbReference type="Pharos" id="Q13409">
    <property type="development level" value="Tbio"/>
</dbReference>
<dbReference type="PRO" id="PR:Q13409"/>
<dbReference type="Proteomes" id="UP000005640">
    <property type="component" value="Chromosome 2"/>
</dbReference>
<dbReference type="RNAct" id="Q13409">
    <property type="molecule type" value="protein"/>
</dbReference>
<dbReference type="Bgee" id="ENSG00000077380">
    <property type="expression patterns" value="Expressed in calcaneal tendon and 165 other cell types or tissues"/>
</dbReference>
<dbReference type="ExpressionAtlas" id="Q13409">
    <property type="expression patterns" value="baseline and differential"/>
</dbReference>
<dbReference type="GO" id="GO:0005813">
    <property type="term" value="C:centrosome"/>
    <property type="evidence" value="ECO:0000314"/>
    <property type="project" value="UniProtKB"/>
</dbReference>
<dbReference type="GO" id="GO:0005737">
    <property type="term" value="C:cytoplasm"/>
    <property type="evidence" value="ECO:0000303"/>
    <property type="project" value="UniProtKB"/>
</dbReference>
<dbReference type="GO" id="GO:0005868">
    <property type="term" value="C:cytoplasmic dynein complex"/>
    <property type="evidence" value="ECO:0000318"/>
    <property type="project" value="GO_Central"/>
</dbReference>
<dbReference type="GO" id="GO:0005829">
    <property type="term" value="C:cytosol"/>
    <property type="evidence" value="ECO:0000304"/>
    <property type="project" value="Reactome"/>
</dbReference>
<dbReference type="GO" id="GO:0030286">
    <property type="term" value="C:dynein complex"/>
    <property type="evidence" value="ECO:0000353"/>
    <property type="project" value="ComplexPortal"/>
</dbReference>
<dbReference type="GO" id="GO:0005874">
    <property type="term" value="C:microtubule"/>
    <property type="evidence" value="ECO:0000314"/>
    <property type="project" value="UniProtKB"/>
</dbReference>
<dbReference type="GO" id="GO:0031982">
    <property type="term" value="C:vesicle"/>
    <property type="evidence" value="ECO:0000314"/>
    <property type="project" value="UniProtKB"/>
</dbReference>
<dbReference type="GO" id="GO:0045504">
    <property type="term" value="F:dynein heavy chain binding"/>
    <property type="evidence" value="ECO:0000318"/>
    <property type="project" value="GO_Central"/>
</dbReference>
<dbReference type="GO" id="GO:0045503">
    <property type="term" value="F:dynein light chain binding"/>
    <property type="evidence" value="ECO:0000318"/>
    <property type="project" value="GO_Central"/>
</dbReference>
<dbReference type="GO" id="GO:0003777">
    <property type="term" value="F:microtubule motor activity"/>
    <property type="evidence" value="ECO:0000303"/>
    <property type="project" value="UniProtKB"/>
</dbReference>
<dbReference type="GO" id="GO:0007018">
    <property type="term" value="P:microtubule-based movement"/>
    <property type="evidence" value="ECO:0000303"/>
    <property type="project" value="UniProtKB"/>
</dbReference>
<dbReference type="GO" id="GO:0010970">
    <property type="term" value="P:transport along microtubule"/>
    <property type="evidence" value="ECO:0000318"/>
    <property type="project" value="GO_Central"/>
</dbReference>
<dbReference type="FunFam" id="2.130.10.10:FF:000095">
    <property type="entry name" value="Cytoplasmic dynein 1 intermediate chain 2"/>
    <property type="match status" value="1"/>
</dbReference>
<dbReference type="FunFam" id="2.130.10.10:FF:000026">
    <property type="entry name" value="cytoplasmic dynein 1 intermediate chain 2 isoform X2"/>
    <property type="match status" value="1"/>
</dbReference>
<dbReference type="Gene3D" id="2.130.10.10">
    <property type="entry name" value="YVTN repeat-like/Quinoprotein amine dehydrogenase"/>
    <property type="match status" value="2"/>
</dbReference>
<dbReference type="InterPro" id="IPR025956">
    <property type="entry name" value="DYNC1I1/DYNC1I2"/>
</dbReference>
<dbReference type="InterPro" id="IPR050687">
    <property type="entry name" value="Dynein_IC"/>
</dbReference>
<dbReference type="InterPro" id="IPR015943">
    <property type="entry name" value="WD40/YVTN_repeat-like_dom_sf"/>
</dbReference>
<dbReference type="InterPro" id="IPR036322">
    <property type="entry name" value="WD40_repeat_dom_sf"/>
</dbReference>
<dbReference type="InterPro" id="IPR001680">
    <property type="entry name" value="WD40_rpt"/>
</dbReference>
<dbReference type="PANTHER" id="PTHR12442:SF37">
    <property type="entry name" value="CYTOPLASMIC DYNEIN 1 INTERMEDIATE CHAIN 2"/>
    <property type="match status" value="1"/>
</dbReference>
<dbReference type="PANTHER" id="PTHR12442">
    <property type="entry name" value="DYNEIN INTERMEDIATE CHAIN"/>
    <property type="match status" value="1"/>
</dbReference>
<dbReference type="Pfam" id="PF11540">
    <property type="entry name" value="Dynein_IC2"/>
    <property type="match status" value="1"/>
</dbReference>
<dbReference type="Pfam" id="PF00400">
    <property type="entry name" value="WD40"/>
    <property type="match status" value="1"/>
</dbReference>
<dbReference type="SMART" id="SM00320">
    <property type="entry name" value="WD40"/>
    <property type="match status" value="5"/>
</dbReference>
<dbReference type="SUPFAM" id="SSF50978">
    <property type="entry name" value="WD40 repeat-like"/>
    <property type="match status" value="1"/>
</dbReference>
<dbReference type="PROSITE" id="PS50294">
    <property type="entry name" value="WD_REPEATS_REGION"/>
    <property type="match status" value="1"/>
</dbReference>
<keyword id="KW-0002">3D-structure</keyword>
<keyword id="KW-0007">Acetylation</keyword>
<keyword id="KW-0025">Alternative splicing</keyword>
<keyword id="KW-0963">Cytoplasm</keyword>
<keyword id="KW-0206">Cytoskeleton</keyword>
<keyword id="KW-0903">Direct protein sequencing</keyword>
<keyword id="KW-0225">Disease variant</keyword>
<keyword id="KW-0243">Dynein</keyword>
<keyword id="KW-0945">Host-virus interaction</keyword>
<keyword id="KW-0991">Intellectual disability</keyword>
<keyword id="KW-0493">Microtubule</keyword>
<keyword id="KW-0505">Motor protein</keyword>
<keyword id="KW-0597">Phosphoprotein</keyword>
<keyword id="KW-1267">Proteomics identification</keyword>
<keyword id="KW-1185">Reference proteome</keyword>
<keyword id="KW-0677">Repeat</keyword>
<keyword id="KW-0813">Transport</keyword>
<keyword id="KW-0853">WD repeat</keyword>
<reference key="1">
    <citation type="submission" date="1999-03" db="EMBL/GenBank/DDBJ databases">
        <title>Cloning of a new human cDNA homologous to Rattus norvegicus cytoplasmic dynein intermediate chain 2C.</title>
        <authorList>
            <person name="Huang J."/>
            <person name="Yu L."/>
            <person name="Zhao S.Y."/>
        </authorList>
    </citation>
    <scope>NUCLEOTIDE SEQUENCE [MRNA] (ISOFORM 2C)</scope>
</reference>
<reference key="2">
    <citation type="submission" date="2001-05" db="EMBL/GenBank/DDBJ databases">
        <authorList>
            <person name="Li N."/>
            <person name="Wan T."/>
            <person name="Zhang M."/>
            <person name="Zhang W."/>
            <person name="Cao X."/>
        </authorList>
    </citation>
    <scope>NUCLEOTIDE SEQUENCE [MRNA] (ISOFORMS 2C AND 2F)</scope>
</reference>
<reference key="3">
    <citation type="submission" date="2003-05" db="EMBL/GenBank/DDBJ databases">
        <title>Cloning of human full-length CDSs in BD Creator(TM) system donor vector.</title>
        <authorList>
            <person name="Kalnine N."/>
            <person name="Chen X."/>
            <person name="Rolfs A."/>
            <person name="Halleck A."/>
            <person name="Hines L."/>
            <person name="Eisenstein S."/>
            <person name="Koundinya M."/>
            <person name="Raphael J."/>
            <person name="Moreira D."/>
            <person name="Kelley T."/>
            <person name="LaBaer J."/>
            <person name="Lin Y."/>
            <person name="Phelan M."/>
            <person name="Farmer A."/>
        </authorList>
    </citation>
    <scope>NUCLEOTIDE SEQUENCE [LARGE SCALE MRNA] (ISOFORM 2C)</scope>
</reference>
<reference key="4">
    <citation type="journal article" date="2004" name="Nat. Genet.">
        <title>Complete sequencing and characterization of 21,243 full-length human cDNAs.</title>
        <authorList>
            <person name="Ota T."/>
            <person name="Suzuki Y."/>
            <person name="Nishikawa T."/>
            <person name="Otsuki T."/>
            <person name="Sugiyama T."/>
            <person name="Irie R."/>
            <person name="Wakamatsu A."/>
            <person name="Hayashi K."/>
            <person name="Sato H."/>
            <person name="Nagai K."/>
            <person name="Kimura K."/>
            <person name="Makita H."/>
            <person name="Sekine M."/>
            <person name="Obayashi M."/>
            <person name="Nishi T."/>
            <person name="Shibahara T."/>
            <person name="Tanaka T."/>
            <person name="Ishii S."/>
            <person name="Yamamoto J."/>
            <person name="Saito K."/>
            <person name="Kawai Y."/>
            <person name="Isono Y."/>
            <person name="Nakamura Y."/>
            <person name="Nagahari K."/>
            <person name="Murakami K."/>
            <person name="Yasuda T."/>
            <person name="Iwayanagi T."/>
            <person name="Wagatsuma M."/>
            <person name="Shiratori A."/>
            <person name="Sudo H."/>
            <person name="Hosoiri T."/>
            <person name="Kaku Y."/>
            <person name="Kodaira H."/>
            <person name="Kondo H."/>
            <person name="Sugawara M."/>
            <person name="Takahashi M."/>
            <person name="Kanda K."/>
            <person name="Yokoi T."/>
            <person name="Furuya T."/>
            <person name="Kikkawa E."/>
            <person name="Omura Y."/>
            <person name="Abe K."/>
            <person name="Kamihara K."/>
            <person name="Katsuta N."/>
            <person name="Sato K."/>
            <person name="Tanikawa M."/>
            <person name="Yamazaki M."/>
            <person name="Ninomiya K."/>
            <person name="Ishibashi T."/>
            <person name="Yamashita H."/>
            <person name="Murakawa K."/>
            <person name="Fujimori K."/>
            <person name="Tanai H."/>
            <person name="Kimata M."/>
            <person name="Watanabe M."/>
            <person name="Hiraoka S."/>
            <person name="Chiba Y."/>
            <person name="Ishida S."/>
            <person name="Ono Y."/>
            <person name="Takiguchi S."/>
            <person name="Watanabe S."/>
            <person name="Yosida M."/>
            <person name="Hotuta T."/>
            <person name="Kusano J."/>
            <person name="Kanehori K."/>
            <person name="Takahashi-Fujii A."/>
            <person name="Hara H."/>
            <person name="Tanase T.-O."/>
            <person name="Nomura Y."/>
            <person name="Togiya S."/>
            <person name="Komai F."/>
            <person name="Hara R."/>
            <person name="Takeuchi K."/>
            <person name="Arita M."/>
            <person name="Imose N."/>
            <person name="Musashino K."/>
            <person name="Yuuki H."/>
            <person name="Oshima A."/>
            <person name="Sasaki N."/>
            <person name="Aotsuka S."/>
            <person name="Yoshikawa Y."/>
            <person name="Matsunawa H."/>
            <person name="Ichihara T."/>
            <person name="Shiohata N."/>
            <person name="Sano S."/>
            <person name="Moriya S."/>
            <person name="Momiyama H."/>
            <person name="Satoh N."/>
            <person name="Takami S."/>
            <person name="Terashima Y."/>
            <person name="Suzuki O."/>
            <person name="Nakagawa S."/>
            <person name="Senoh A."/>
            <person name="Mizoguchi H."/>
            <person name="Goto Y."/>
            <person name="Shimizu F."/>
            <person name="Wakebe H."/>
            <person name="Hishigaki H."/>
            <person name="Watanabe T."/>
            <person name="Sugiyama A."/>
            <person name="Takemoto M."/>
            <person name="Kawakami B."/>
            <person name="Yamazaki M."/>
            <person name="Watanabe K."/>
            <person name="Kumagai A."/>
            <person name="Itakura S."/>
            <person name="Fukuzumi Y."/>
            <person name="Fujimori Y."/>
            <person name="Komiyama M."/>
            <person name="Tashiro H."/>
            <person name="Tanigami A."/>
            <person name="Fujiwara T."/>
            <person name="Ono T."/>
            <person name="Yamada K."/>
            <person name="Fujii Y."/>
            <person name="Ozaki K."/>
            <person name="Hirao M."/>
            <person name="Ohmori Y."/>
            <person name="Kawabata A."/>
            <person name="Hikiji T."/>
            <person name="Kobatake N."/>
            <person name="Inagaki H."/>
            <person name="Ikema Y."/>
            <person name="Okamoto S."/>
            <person name="Okitani R."/>
            <person name="Kawakami T."/>
            <person name="Noguchi S."/>
            <person name="Itoh T."/>
            <person name="Shigeta K."/>
            <person name="Senba T."/>
            <person name="Matsumura K."/>
            <person name="Nakajima Y."/>
            <person name="Mizuno T."/>
            <person name="Morinaga M."/>
            <person name="Sasaki M."/>
            <person name="Togashi T."/>
            <person name="Oyama M."/>
            <person name="Hata H."/>
            <person name="Watanabe M."/>
            <person name="Komatsu T."/>
            <person name="Mizushima-Sugano J."/>
            <person name="Satoh T."/>
            <person name="Shirai Y."/>
            <person name="Takahashi Y."/>
            <person name="Nakagawa K."/>
            <person name="Okumura K."/>
            <person name="Nagase T."/>
            <person name="Nomura N."/>
            <person name="Kikuchi H."/>
            <person name="Masuho Y."/>
            <person name="Yamashita R."/>
            <person name="Nakai K."/>
            <person name="Yada T."/>
            <person name="Nakamura Y."/>
            <person name="Ohara O."/>
            <person name="Isogai T."/>
            <person name="Sugano S."/>
        </authorList>
    </citation>
    <scope>NUCLEOTIDE SEQUENCE [LARGE SCALE MRNA] (ISOFORMS 2A AND 3)</scope>
    <source>
        <tissue>Brain</tissue>
        <tissue>Thalamus</tissue>
    </source>
</reference>
<reference key="5">
    <citation type="journal article" date="2007" name="BMC Genomics">
        <title>The full-ORF clone resource of the German cDNA consortium.</title>
        <authorList>
            <person name="Bechtel S."/>
            <person name="Rosenfelder H."/>
            <person name="Duda A."/>
            <person name="Schmidt C.P."/>
            <person name="Ernst U."/>
            <person name="Wellenreuther R."/>
            <person name="Mehrle A."/>
            <person name="Schuster C."/>
            <person name="Bahr A."/>
            <person name="Bloecker H."/>
            <person name="Heubner D."/>
            <person name="Hoerlein A."/>
            <person name="Michel G."/>
            <person name="Wedler H."/>
            <person name="Koehrer K."/>
            <person name="Ottenwaelder B."/>
            <person name="Poustka A."/>
            <person name="Wiemann S."/>
            <person name="Schupp I."/>
        </authorList>
    </citation>
    <scope>NUCLEOTIDE SEQUENCE [LARGE SCALE MRNA] (ISOFORM 2C)</scope>
    <source>
        <tissue>Endometrium</tissue>
        <tissue>Testis</tissue>
    </source>
</reference>
<reference key="6">
    <citation type="journal article" date="2005" name="Nature">
        <title>Generation and annotation of the DNA sequences of human chromosomes 2 and 4.</title>
        <authorList>
            <person name="Hillier L.W."/>
            <person name="Graves T.A."/>
            <person name="Fulton R.S."/>
            <person name="Fulton L.A."/>
            <person name="Pepin K.H."/>
            <person name="Minx P."/>
            <person name="Wagner-McPherson C."/>
            <person name="Layman D."/>
            <person name="Wylie K."/>
            <person name="Sekhon M."/>
            <person name="Becker M.C."/>
            <person name="Fewell G.A."/>
            <person name="Delehaunty K.D."/>
            <person name="Miner T.L."/>
            <person name="Nash W.E."/>
            <person name="Kremitzki C."/>
            <person name="Oddy L."/>
            <person name="Du H."/>
            <person name="Sun H."/>
            <person name="Bradshaw-Cordum H."/>
            <person name="Ali J."/>
            <person name="Carter J."/>
            <person name="Cordes M."/>
            <person name="Harris A."/>
            <person name="Isak A."/>
            <person name="van Brunt A."/>
            <person name="Nguyen C."/>
            <person name="Du F."/>
            <person name="Courtney L."/>
            <person name="Kalicki J."/>
            <person name="Ozersky P."/>
            <person name="Abbott S."/>
            <person name="Armstrong J."/>
            <person name="Belter E.A."/>
            <person name="Caruso L."/>
            <person name="Cedroni M."/>
            <person name="Cotton M."/>
            <person name="Davidson T."/>
            <person name="Desai A."/>
            <person name="Elliott G."/>
            <person name="Erb T."/>
            <person name="Fronick C."/>
            <person name="Gaige T."/>
            <person name="Haakenson W."/>
            <person name="Haglund K."/>
            <person name="Holmes A."/>
            <person name="Harkins R."/>
            <person name="Kim K."/>
            <person name="Kruchowski S.S."/>
            <person name="Strong C.M."/>
            <person name="Grewal N."/>
            <person name="Goyea E."/>
            <person name="Hou S."/>
            <person name="Levy A."/>
            <person name="Martinka S."/>
            <person name="Mead K."/>
            <person name="McLellan M.D."/>
            <person name="Meyer R."/>
            <person name="Randall-Maher J."/>
            <person name="Tomlinson C."/>
            <person name="Dauphin-Kohlberg S."/>
            <person name="Kozlowicz-Reilly A."/>
            <person name="Shah N."/>
            <person name="Swearengen-Shahid S."/>
            <person name="Snider J."/>
            <person name="Strong J.T."/>
            <person name="Thompson J."/>
            <person name="Yoakum M."/>
            <person name="Leonard S."/>
            <person name="Pearman C."/>
            <person name="Trani L."/>
            <person name="Radionenko M."/>
            <person name="Waligorski J.E."/>
            <person name="Wang C."/>
            <person name="Rock S.M."/>
            <person name="Tin-Wollam A.-M."/>
            <person name="Maupin R."/>
            <person name="Latreille P."/>
            <person name="Wendl M.C."/>
            <person name="Yang S.-P."/>
            <person name="Pohl C."/>
            <person name="Wallis J.W."/>
            <person name="Spieth J."/>
            <person name="Bieri T.A."/>
            <person name="Berkowicz N."/>
            <person name="Nelson J.O."/>
            <person name="Osborne J."/>
            <person name="Ding L."/>
            <person name="Meyer R."/>
            <person name="Sabo A."/>
            <person name="Shotland Y."/>
            <person name="Sinha P."/>
            <person name="Wohldmann P.E."/>
            <person name="Cook L.L."/>
            <person name="Hickenbotham M.T."/>
            <person name="Eldred J."/>
            <person name="Williams D."/>
            <person name="Jones T.A."/>
            <person name="She X."/>
            <person name="Ciccarelli F.D."/>
            <person name="Izaurralde E."/>
            <person name="Taylor J."/>
            <person name="Schmutz J."/>
            <person name="Myers R.M."/>
            <person name="Cox D.R."/>
            <person name="Huang X."/>
            <person name="McPherson J.D."/>
            <person name="Mardis E.R."/>
            <person name="Clifton S.W."/>
            <person name="Warren W.C."/>
            <person name="Chinwalla A.T."/>
            <person name="Eddy S.R."/>
            <person name="Marra M.A."/>
            <person name="Ovcharenko I."/>
            <person name="Furey T.S."/>
            <person name="Miller W."/>
            <person name="Eichler E.E."/>
            <person name="Bork P."/>
            <person name="Suyama M."/>
            <person name="Torrents D."/>
            <person name="Waterston R.H."/>
            <person name="Wilson R.K."/>
        </authorList>
    </citation>
    <scope>NUCLEOTIDE SEQUENCE [LARGE SCALE GENOMIC DNA]</scope>
</reference>
<reference key="7">
    <citation type="submission" date="2005-09" db="EMBL/GenBank/DDBJ databases">
        <authorList>
            <person name="Mural R.J."/>
            <person name="Istrail S."/>
            <person name="Sutton G.G."/>
            <person name="Florea L."/>
            <person name="Halpern A.L."/>
            <person name="Mobarry C.M."/>
            <person name="Lippert R."/>
            <person name="Walenz B."/>
            <person name="Shatkay H."/>
            <person name="Dew I."/>
            <person name="Miller J.R."/>
            <person name="Flanigan M.J."/>
            <person name="Edwards N.J."/>
            <person name="Bolanos R."/>
            <person name="Fasulo D."/>
            <person name="Halldorsson B.V."/>
            <person name="Hannenhalli S."/>
            <person name="Turner R."/>
            <person name="Yooseph S."/>
            <person name="Lu F."/>
            <person name="Nusskern D.R."/>
            <person name="Shue B.C."/>
            <person name="Zheng X.H."/>
            <person name="Zhong F."/>
            <person name="Delcher A.L."/>
            <person name="Huson D.H."/>
            <person name="Kravitz S.A."/>
            <person name="Mouchard L."/>
            <person name="Reinert K."/>
            <person name="Remington K.A."/>
            <person name="Clark A.G."/>
            <person name="Waterman M.S."/>
            <person name="Eichler E.E."/>
            <person name="Adams M.D."/>
            <person name="Hunkapiller M.W."/>
            <person name="Myers E.W."/>
            <person name="Venter J.C."/>
        </authorList>
    </citation>
    <scope>NUCLEOTIDE SEQUENCE [LARGE SCALE GENOMIC DNA]</scope>
</reference>
<reference key="8">
    <citation type="journal article" date="2004" name="Genome Res.">
        <title>The status, quality, and expansion of the NIH full-length cDNA project: the Mammalian Gene Collection (MGC).</title>
        <authorList>
            <consortium name="The MGC Project Team"/>
        </authorList>
    </citation>
    <scope>NUCLEOTIDE SEQUENCE [LARGE SCALE MRNA] (ISOFORM 2C)</scope>
    <source>
        <tissue>Kidney</tissue>
        <tissue>Skin</tissue>
        <tissue>Testis</tissue>
    </source>
</reference>
<reference key="9">
    <citation type="journal article" date="1995" name="J. Cell Biol.">
        <title>Cytoplasmic dynein binds dynactin through a direct interaction between the intermediate chains and p150Glued.</title>
        <authorList>
            <person name="Vaughan K.T."/>
            <person name="Vallee R.B."/>
        </authorList>
    </citation>
    <scope>NUCLEOTIDE SEQUENCE [MRNA] OF 82-448 (ISOFORM 2A)</scope>
</reference>
<reference key="10">
    <citation type="submission" date="2007-03" db="UniProtKB">
        <authorList>
            <person name="Lubec G."/>
            <person name="Afjehi-Sadat L."/>
        </authorList>
    </citation>
    <scope>PROTEIN SEQUENCE OF 236-250</scope>
    <scope>IDENTIFICATION BY MASS SPECTROMETRY</scope>
    <source>
        <tissue>Brain</tissue>
        <tissue>Cajal-Retzius cell</tissue>
    </source>
</reference>
<reference key="11">
    <citation type="journal article" date="2003" name="Nature">
        <title>Proteomic characterization of the human centrosome by protein correlation profiling.</title>
        <authorList>
            <person name="Andersen J.S."/>
            <person name="Wilkinson C.J."/>
            <person name="Mayor T."/>
            <person name="Mortensen P."/>
            <person name="Nigg E.A."/>
            <person name="Mann M."/>
        </authorList>
    </citation>
    <scope>IDENTIFICATION BY MASS SPECTROMETRY</scope>
    <source>
        <tissue>Lymphoblast</tissue>
    </source>
</reference>
<reference key="12">
    <citation type="journal article" date="2006" name="Nat. Biotechnol.">
        <title>A probability-based approach for high-throughput protein phosphorylation analysis and site localization.</title>
        <authorList>
            <person name="Beausoleil S.A."/>
            <person name="Villen J."/>
            <person name="Gerber S.A."/>
            <person name="Rush J."/>
            <person name="Gygi S.P."/>
        </authorList>
    </citation>
    <scope>IDENTIFICATION BY MASS SPECTROMETRY [LARGE SCALE ANALYSIS]</scope>
    <source>
        <tissue>Cervix carcinoma</tissue>
    </source>
</reference>
<reference key="13">
    <citation type="journal article" date="2008" name="Proc. Natl. Acad. Sci. U.S.A.">
        <title>A quantitative atlas of mitotic phosphorylation.</title>
        <authorList>
            <person name="Dephoure N."/>
            <person name="Zhou C."/>
            <person name="Villen J."/>
            <person name="Beausoleil S.A."/>
            <person name="Bakalarski C.E."/>
            <person name="Elledge S.J."/>
            <person name="Gygi S.P."/>
        </authorList>
    </citation>
    <scope>PHOSPHORYLATION [LARGE SCALE ANALYSIS] AT SER-97</scope>
    <scope>PHOSPHORYLATION [LARGE SCALE ANALYSIS] AT SER-73 (ISOFORMS 2B; 2C AND 2F)</scope>
    <scope>IDENTIFICATION BY MASS SPECTROMETRY [LARGE SCALE ANALYSIS]</scope>
    <source>
        <tissue>Cervix carcinoma</tissue>
    </source>
</reference>
<reference key="14">
    <citation type="journal article" date="2009" name="Anal. Chem.">
        <title>Lys-N and trypsin cover complementary parts of the phosphoproteome in a refined SCX-based approach.</title>
        <authorList>
            <person name="Gauci S."/>
            <person name="Helbig A.O."/>
            <person name="Slijper M."/>
            <person name="Krijgsveld J."/>
            <person name="Heck A.J."/>
            <person name="Mohammed S."/>
        </authorList>
    </citation>
    <scope>IDENTIFICATION BY MASS SPECTROMETRY [LARGE SCALE ANALYSIS]</scope>
</reference>
<reference key="15">
    <citation type="journal article" date="2009" name="Cell Host Microbe">
        <title>Adenovirus transport via direct interaction of cytoplasmic dynein with the viral capsid hexon subunit.</title>
        <authorList>
            <person name="Bremner K.H."/>
            <person name="Scherer J."/>
            <person name="Yi J."/>
            <person name="Vershinin M."/>
            <person name="Gross S.P."/>
            <person name="Vallee R.B."/>
        </authorList>
    </citation>
    <scope>INTERACTION WITH HUMAN ADENOVIRUS HEXON PROTEIN (MICROBIAL INFECTION)</scope>
</reference>
<reference key="16">
    <citation type="journal article" date="2009" name="Sci. Signal.">
        <title>Quantitative phosphoproteomic analysis of T cell receptor signaling reveals system-wide modulation of protein-protein interactions.</title>
        <authorList>
            <person name="Mayya V."/>
            <person name="Lundgren D.H."/>
            <person name="Hwang S.-I."/>
            <person name="Rezaul K."/>
            <person name="Wu L."/>
            <person name="Eng J.K."/>
            <person name="Rodionov V."/>
            <person name="Han D.K."/>
        </authorList>
    </citation>
    <scope>PHOSPHORYLATION [LARGE SCALE ANALYSIS] AT SER-104</scope>
    <scope>PHOSPHORYLATION [LARGE SCALE ANALYSIS] AT SER-81 (ISOFORMS 2B; 2C AND 2F)</scope>
    <scope>IDENTIFICATION BY MASS SPECTROMETRY [LARGE SCALE ANALYSIS]</scope>
    <source>
        <tissue>Leukemic T-cell</tissue>
    </source>
</reference>
<reference key="17">
    <citation type="journal article" date="2010" name="Sci. Signal.">
        <title>Quantitative phosphoproteomics reveals widespread full phosphorylation site occupancy during mitosis.</title>
        <authorList>
            <person name="Olsen J.V."/>
            <person name="Vermeulen M."/>
            <person name="Santamaria A."/>
            <person name="Kumar C."/>
            <person name="Miller M.L."/>
            <person name="Jensen L.J."/>
            <person name="Gnad F."/>
            <person name="Cox J."/>
            <person name="Jensen T.S."/>
            <person name="Nigg E.A."/>
            <person name="Brunak S."/>
            <person name="Mann M."/>
        </authorList>
    </citation>
    <scope>PHOSPHORYLATION [LARGE SCALE ANALYSIS] AT SER-73 (ISOFORMS 2B; 2C AND 2F)</scope>
    <scope>IDENTIFICATION BY MASS SPECTROMETRY [LARGE SCALE ANALYSIS]</scope>
    <source>
        <tissue>Cervix carcinoma</tissue>
    </source>
</reference>
<reference key="18">
    <citation type="journal article" date="2011" name="BMC Syst. Biol.">
        <title>Initial characterization of the human central proteome.</title>
        <authorList>
            <person name="Burkard T.R."/>
            <person name="Planyavsky M."/>
            <person name="Kaupe I."/>
            <person name="Breitwieser F.P."/>
            <person name="Buerckstuemmer T."/>
            <person name="Bennett K.L."/>
            <person name="Superti-Furga G."/>
            <person name="Colinge J."/>
        </authorList>
    </citation>
    <scope>IDENTIFICATION BY MASS SPECTROMETRY [LARGE SCALE ANALYSIS]</scope>
</reference>
<reference key="19">
    <citation type="journal article" date="2011" name="Sci. Signal.">
        <title>System-wide temporal characterization of the proteome and phosphoproteome of human embryonic stem cell differentiation.</title>
        <authorList>
            <person name="Rigbolt K.T."/>
            <person name="Prokhorova T.A."/>
            <person name="Akimov V."/>
            <person name="Henningsen J."/>
            <person name="Johansen P.T."/>
            <person name="Kratchmarova I."/>
            <person name="Kassem M."/>
            <person name="Mann M."/>
            <person name="Olsen J.V."/>
            <person name="Blagoev B."/>
        </authorList>
    </citation>
    <scope>PHOSPHORYLATION [LARGE SCALE ANALYSIS] AT SER-101</scope>
    <scope>IDENTIFICATION BY MASS SPECTROMETRY [LARGE SCALE ANALYSIS]</scope>
</reference>
<reference key="20">
    <citation type="journal article" date="2012" name="Proc. Natl. Acad. Sci. U.S.A.">
        <title>N-terminal acetylome analyses and functional insights of the N-terminal acetyltransferase NatB.</title>
        <authorList>
            <person name="Van Damme P."/>
            <person name="Lasa M."/>
            <person name="Polevoda B."/>
            <person name="Gazquez C."/>
            <person name="Elosegui-Artola A."/>
            <person name="Kim D.S."/>
            <person name="De Juan-Pardo E."/>
            <person name="Demeyer K."/>
            <person name="Hole K."/>
            <person name="Larrea E."/>
            <person name="Timmerman E."/>
            <person name="Prieto J."/>
            <person name="Arnesen T."/>
            <person name="Sherman F."/>
            <person name="Gevaert K."/>
            <person name="Aldabe R."/>
        </authorList>
    </citation>
    <scope>ACETYLATION [LARGE SCALE ANALYSIS] AT SER-2</scope>
    <scope>CLEAVAGE OF INITIATOR METHIONINE [LARGE SCALE ANALYSIS]</scope>
    <scope>IDENTIFICATION BY MASS SPECTROMETRY [LARGE SCALE ANALYSIS]</scope>
</reference>
<reference key="21">
    <citation type="journal article" date="2013" name="J. Proteome Res.">
        <title>Toward a comprehensive characterization of a human cancer cell phosphoproteome.</title>
        <authorList>
            <person name="Zhou H."/>
            <person name="Di Palma S."/>
            <person name="Preisinger C."/>
            <person name="Peng M."/>
            <person name="Polat A.N."/>
            <person name="Heck A.J."/>
            <person name="Mohammed S."/>
        </authorList>
    </citation>
    <scope>PHOSPHORYLATION [LARGE SCALE ANALYSIS] AT SER-51; THR-95; SER-97; SER-101 AND SER-104</scope>
    <scope>IDENTIFICATION BY MASS SPECTROMETRY [LARGE SCALE ANALYSIS]</scope>
    <source>
        <tissue>Cervix carcinoma</tissue>
        <tissue>Erythroleukemia</tissue>
    </source>
</reference>
<reference key="22">
    <citation type="journal article" date="2014" name="J. Proteomics">
        <title>An enzyme assisted RP-RPLC approach for in-depth analysis of human liver phosphoproteome.</title>
        <authorList>
            <person name="Bian Y."/>
            <person name="Song C."/>
            <person name="Cheng K."/>
            <person name="Dong M."/>
            <person name="Wang F."/>
            <person name="Huang J."/>
            <person name="Sun D."/>
            <person name="Wang L."/>
            <person name="Ye M."/>
            <person name="Zou H."/>
        </authorList>
    </citation>
    <scope>PHOSPHORYLATION [LARGE SCALE ANALYSIS] AT SER-84 (ISOFORMS 2B; 2C AND 2F)</scope>
    <scope>IDENTIFICATION BY MASS SPECTROMETRY [LARGE SCALE ANALYSIS]</scope>
    <source>
        <tissue>Liver</tissue>
    </source>
</reference>
<reference key="23">
    <citation type="journal article" date="2015" name="Proteomics">
        <title>N-terminome analysis of the human mitochondrial proteome.</title>
        <authorList>
            <person name="Vaca Jacome A.S."/>
            <person name="Rabilloud T."/>
            <person name="Schaeffer-Reiss C."/>
            <person name="Rompais M."/>
            <person name="Ayoub D."/>
            <person name="Lane L."/>
            <person name="Bairoch A."/>
            <person name="Van Dorsselaer A."/>
            <person name="Carapito C."/>
        </authorList>
    </citation>
    <scope>IDENTIFICATION BY MASS SPECTROMETRY [LARGE SCALE ANALYSIS]</scope>
</reference>
<reference key="24">
    <citation type="journal article" date="2019" name="Am. J. Hum. Genet.">
        <title>Bi-allelic variants in DYNC1I2 cause syndromic microcephaly with intellectual disability, cerebral malformations, and dysmorphic facial features.</title>
        <authorList>
            <person name="Ansar M."/>
            <person name="Ullah F."/>
            <person name="Paracha S.A."/>
            <person name="Adams D.J."/>
            <person name="Lai A."/>
            <person name="Pais L."/>
            <person name="Iwaszkiewicz J."/>
            <person name="Millan F."/>
            <person name="Sarwar M.T."/>
            <person name="Agha Z."/>
            <person name="Shah S.F."/>
            <person name="Qaisar A.A."/>
            <person name="Falconnet E."/>
            <person name="Zoete V."/>
            <person name="Ranza E."/>
            <person name="Makrythanasis P."/>
            <person name="Santoni F.A."/>
            <person name="Ahmed J."/>
            <person name="Katsanis N."/>
            <person name="Walsh C."/>
            <person name="Davis E.E."/>
            <person name="Antonarakis S.E."/>
        </authorList>
    </citation>
    <scope>INVOLVEMENT IN NEDMIBA</scope>
    <scope>VARIANTS NEDMIBA CYS-247 AND 290-GLN--ALA-638 DEL</scope>
    <scope>CHARACTERIZATION OF VARIANTS NEDMIBA CYS-247 AND 290-GLN--ALA-638 DEL</scope>
    <scope>CHARACTERIZATION OF VARIANT ALA-516</scope>
    <scope>FUNCTION</scope>
</reference>
<reference key="25">
    <citation type="journal article" date="2016" name="J. Biol. Chem.">
        <title>Molecular basis for the protein recognition specificity of the dynein light chain DYNLT1/Tctex1: characterization of the interaction with activin receptor IIB.</title>
        <authorList>
            <person name="Merino-Gracia J."/>
            <person name="Zamora-Carreras H."/>
            <person name="Bruix M."/>
            <person name="Rodriguez-Crespo I."/>
        </authorList>
    </citation>
    <scope>STRUCTURE BY NMR OF 134-154 IN COMPLEX WITH DYNLT1</scope>
</reference>
<reference evidence="18 19 20 21 22" key="26">
    <citation type="journal article" date="2018" name="Nature">
        <title>Cryo-EM shows how dynactin recruits two dyneins for faster movement.</title>
        <authorList>
            <person name="Urnavicius L."/>
            <person name="Lau C.K."/>
            <person name="Elshenawy M.M."/>
            <person name="Morales-Rios E."/>
            <person name="Motz C."/>
            <person name="Yildiz A."/>
            <person name="Carter A.P."/>
        </authorList>
    </citation>
    <scope>STRUCTURE BY ELECTRON MICROSCOPY (3.40 ANGSTROMS)</scope>
    <scope>SUBUNIT</scope>
</reference>
<reference evidence="23 24 25 26" key="27">
    <citation type="journal article" date="2022" name="Nature">
        <title>Structure of dynein-dynactin on microtubules shows tandem adaptor binding.</title>
        <authorList>
            <person name="Chaaban S."/>
            <person name="Carter A.P."/>
        </authorList>
    </citation>
    <scope>STRUCTURE BY ELECTRON MICROSCOPY (3.30 ANGSTROMS)</scope>
    <scope>SUBUNIT</scope>
</reference>
<evidence type="ECO:0000250" key="1">
    <source>
        <dbReference type="UniProtKB" id="O88487"/>
    </source>
</evidence>
<evidence type="ECO:0000250" key="2">
    <source>
        <dbReference type="UniProtKB" id="Q62871"/>
    </source>
</evidence>
<evidence type="ECO:0000256" key="3">
    <source>
        <dbReference type="SAM" id="MobiDB-lite"/>
    </source>
</evidence>
<evidence type="ECO:0000269" key="4">
    <source>
    </source>
</evidence>
<evidence type="ECO:0000269" key="5">
    <source>
    </source>
</evidence>
<evidence type="ECO:0000269" key="6">
    <source>
    </source>
</evidence>
<evidence type="ECO:0000269" key="7">
    <source>
    </source>
</evidence>
<evidence type="ECO:0000269" key="8">
    <source>
    </source>
</evidence>
<evidence type="ECO:0000303" key="9">
    <source>
    </source>
</evidence>
<evidence type="ECO:0000303" key="10">
    <source>
    </source>
</evidence>
<evidence type="ECO:0000303" key="11">
    <source>
    </source>
</evidence>
<evidence type="ECO:0000303" key="12">
    <source ref="1"/>
</evidence>
<evidence type="ECO:0000303" key="13">
    <source ref="2"/>
</evidence>
<evidence type="ECO:0000303" key="14">
    <source ref="3"/>
</evidence>
<evidence type="ECO:0000305" key="15"/>
<evidence type="ECO:0000305" key="16">
    <source>
    </source>
</evidence>
<evidence type="ECO:0000312" key="17">
    <source>
        <dbReference type="HGNC" id="HGNC:2964"/>
    </source>
</evidence>
<evidence type="ECO:0007744" key="18">
    <source>
        <dbReference type="PDB" id="6F1T"/>
    </source>
</evidence>
<evidence type="ECO:0007744" key="19">
    <source>
        <dbReference type="PDB" id="6F1U"/>
    </source>
</evidence>
<evidence type="ECO:0007744" key="20">
    <source>
        <dbReference type="PDB" id="6F1Z"/>
    </source>
</evidence>
<evidence type="ECO:0007744" key="21">
    <source>
        <dbReference type="PDB" id="6F38"/>
    </source>
</evidence>
<evidence type="ECO:0007744" key="22">
    <source>
        <dbReference type="PDB" id="6F3A"/>
    </source>
</evidence>
<evidence type="ECO:0007744" key="23">
    <source>
        <dbReference type="PDB" id="7Z8F"/>
    </source>
</evidence>
<evidence type="ECO:0007744" key="24">
    <source>
        <dbReference type="PDB" id="7Z8I"/>
    </source>
</evidence>
<evidence type="ECO:0007744" key="25">
    <source>
        <dbReference type="PDB" id="7Z8J"/>
    </source>
</evidence>
<evidence type="ECO:0007744" key="26">
    <source>
        <dbReference type="PDB" id="7Z8K"/>
    </source>
</evidence>
<evidence type="ECO:0007744" key="27">
    <source>
    </source>
</evidence>
<evidence type="ECO:0007744" key="28">
    <source>
    </source>
</evidence>
<evidence type="ECO:0007744" key="29">
    <source>
    </source>
</evidence>
<evidence type="ECO:0007744" key="30">
    <source>
    </source>
</evidence>
<evidence type="ECO:0007744" key="31">
    <source>
    </source>
</evidence>
<evidence type="ECO:0007744" key="32">
    <source>
    </source>
</evidence>
<evidence type="ECO:0007744" key="33">
    <source>
    </source>
</evidence>
<evidence type="ECO:0007829" key="34">
    <source>
        <dbReference type="PDB" id="5JPW"/>
    </source>
</evidence>
<evidence type="ECO:0007829" key="35">
    <source>
        <dbReference type="PDB" id="6F1T"/>
    </source>
</evidence>
<evidence type="ECO:0007829" key="36">
    <source>
        <dbReference type="PDB" id="6F1U"/>
    </source>
</evidence>
<evidence type="ECO:0007829" key="37">
    <source>
        <dbReference type="PDB" id="6F1Z"/>
    </source>
</evidence>
<evidence type="ECO:0007829" key="38">
    <source>
        <dbReference type="PDB" id="7Z8I"/>
    </source>
</evidence>
<feature type="initiator methionine" description="Removed" evidence="31">
    <location>
        <position position="1"/>
    </location>
</feature>
<feature type="chain" id="PRO_0000114655" description="Cytoplasmic dynein 1 intermediate chain 2">
    <location>
        <begin position="2"/>
        <end position="638"/>
    </location>
</feature>
<feature type="repeat" description="WD 1">
    <location>
        <begin position="277"/>
        <end position="326"/>
    </location>
</feature>
<feature type="repeat" description="WD 2">
    <location>
        <begin position="330"/>
        <end position="370"/>
    </location>
</feature>
<feature type="repeat" description="WD 3">
    <location>
        <begin position="379"/>
        <end position="420"/>
    </location>
</feature>
<feature type="repeat" description="WD 4">
    <location>
        <begin position="429"/>
        <end position="469"/>
    </location>
</feature>
<feature type="repeat" description="WD 5">
    <location>
        <begin position="474"/>
        <end position="519"/>
    </location>
</feature>
<feature type="repeat" description="WD 6">
    <location>
        <begin position="522"/>
        <end position="562"/>
    </location>
</feature>
<feature type="repeat" description="WD 7">
    <location>
        <begin position="568"/>
        <end position="607"/>
    </location>
</feature>
<feature type="region of interest" description="Disordered" evidence="3">
    <location>
        <begin position="1"/>
        <end position="135"/>
    </location>
</feature>
<feature type="region of interest" description="Disordered" evidence="3">
    <location>
        <begin position="155"/>
        <end position="214"/>
    </location>
</feature>
<feature type="compositionally biased region" description="Basic and acidic residues" evidence="3">
    <location>
        <begin position="1"/>
        <end position="13"/>
    </location>
</feature>
<feature type="compositionally biased region" description="Basic and acidic residues" evidence="3">
    <location>
        <begin position="20"/>
        <end position="43"/>
    </location>
</feature>
<feature type="compositionally biased region" description="Low complexity" evidence="3">
    <location>
        <begin position="88"/>
        <end position="97"/>
    </location>
</feature>
<feature type="compositionally biased region" description="Basic and acidic residues" evidence="3">
    <location>
        <begin position="190"/>
        <end position="214"/>
    </location>
</feature>
<feature type="modified residue" description="N-acetylserine" evidence="31">
    <location>
        <position position="2"/>
    </location>
</feature>
<feature type="modified residue" description="Diphosphoserine" evidence="1">
    <location>
        <position position="51"/>
    </location>
</feature>
<feature type="modified residue" description="Phosphoserine" evidence="32">
    <location>
        <position position="51"/>
    </location>
</feature>
<feature type="modified residue" description="Phosphoserine" evidence="2">
    <location>
        <position position="90"/>
    </location>
</feature>
<feature type="modified residue" description="Phosphothreonine" evidence="32">
    <location>
        <position position="95"/>
    </location>
</feature>
<feature type="modified residue" description="Phosphoserine" evidence="27 32">
    <location>
        <position position="97"/>
    </location>
</feature>
<feature type="modified residue" description="Phosphoserine" evidence="30 32">
    <location>
        <position position="101"/>
    </location>
</feature>
<feature type="modified residue" description="Phosphoserine" evidence="28 32">
    <location>
        <position position="104"/>
    </location>
</feature>
<feature type="splice variant" id="VSP_054377" description="In isoform 3." evidence="9">
    <original>VFSEYW</original>
    <variation>AEQPLRVVTADTCLFHYL</variation>
    <location>
        <begin position="76"/>
        <end position="81"/>
    </location>
</feature>
<feature type="splice variant" id="VSP_001336" description="In isoform 2B, isoform 2C and isoform 2F." evidence="10 11 12 13 14">
    <location>
        <begin position="77"/>
        <end position="82"/>
    </location>
</feature>
<feature type="splice variant" id="VSP_001337" description="In isoform 2C, isoform 2F and isoform 3." evidence="9 10 11 12 13 14">
    <location>
        <begin position="113"/>
        <end position="132"/>
    </location>
</feature>
<feature type="splice variant" id="VSP_023011" description="In isoform 2E and isoform 2F." evidence="13">
    <location>
        <position position="602"/>
    </location>
</feature>
<feature type="sequence variant" id="VAR_082947" description="In NEDMIBA; loss-of-function variant; does not rescue neurodevelopmental defects in zebrafish morphants." evidence="7">
    <original>Y</original>
    <variation>C</variation>
    <location>
        <position position="247"/>
    </location>
</feature>
<feature type="sequence variant" id="VAR_082948" description="In NEDMIBA; loss-of-function variant; does not rescue neurodevelopmental defects in zebrafish morphants." evidence="7">
    <location>
        <begin position="290"/>
        <end position="638"/>
    </location>
</feature>
<feature type="sequence variant" id="VAR_082949" description="In NEDMIBA; likely benign; can rescue neurodevelopmental defects in zebrafish morphants; dbSNP:rs767705533." evidence="7">
    <original>P</original>
    <variation>A</variation>
    <location>
        <position position="516"/>
    </location>
</feature>
<feature type="sequence conflict" description="In Ref. 1; AAP97254." evidence="15" ref="1">
    <original>T</original>
    <variation>S</variation>
    <location>
        <position position="510"/>
    </location>
</feature>
<feature type="sequence conflict" description="In Ref. 1; AAP97254." evidence="15" ref="1">
    <original>D</original>
    <variation>G</variation>
    <location>
        <position position="525"/>
    </location>
</feature>
<feature type="sequence conflict" description="In Ref. 8; AAI09376." evidence="15" ref="8">
    <original>A</original>
    <variation>G</variation>
    <location>
        <position position="572"/>
    </location>
</feature>
<feature type="strand" evidence="34">
    <location>
        <begin position="144"/>
        <end position="147"/>
    </location>
</feature>
<feature type="helix" evidence="37">
    <location>
        <begin position="210"/>
        <end position="217"/>
    </location>
</feature>
<feature type="strand" evidence="37">
    <location>
        <begin position="219"/>
        <end position="221"/>
    </location>
</feature>
<feature type="helix" evidence="37">
    <location>
        <begin position="222"/>
        <end position="235"/>
    </location>
</feature>
<feature type="strand" evidence="38">
    <location>
        <begin position="265"/>
        <end position="271"/>
    </location>
</feature>
<feature type="strand" evidence="38">
    <location>
        <begin position="274"/>
        <end position="277"/>
    </location>
</feature>
<feature type="strand" evidence="38">
    <location>
        <begin position="282"/>
        <end position="287"/>
    </location>
</feature>
<feature type="strand" evidence="36">
    <location>
        <begin position="289"/>
        <end position="293"/>
    </location>
</feature>
<feature type="strand" evidence="38">
    <location>
        <begin position="294"/>
        <end position="299"/>
    </location>
</feature>
<feature type="strand" evidence="35">
    <location>
        <begin position="306"/>
        <end position="308"/>
    </location>
</feature>
<feature type="strand" evidence="38">
    <location>
        <begin position="310"/>
        <end position="320"/>
    </location>
</feature>
<feature type="strand" evidence="38">
    <location>
        <begin position="326"/>
        <end position="333"/>
    </location>
</feature>
<feature type="strand" evidence="38">
    <location>
        <begin position="335"/>
        <end position="340"/>
    </location>
</feature>
<feature type="strand" evidence="38">
    <location>
        <begin position="347"/>
        <end position="352"/>
    </location>
</feature>
<feature type="strand" evidence="36">
    <location>
        <begin position="353"/>
        <end position="355"/>
    </location>
</feature>
<feature type="strand" evidence="38">
    <location>
        <begin position="357"/>
        <end position="365"/>
    </location>
</feature>
<feature type="strand" evidence="35">
    <location>
        <begin position="377"/>
        <end position="380"/>
    </location>
</feature>
<feature type="strand" evidence="38">
    <location>
        <begin position="384"/>
        <end position="392"/>
    </location>
</feature>
<feature type="strand" evidence="38">
    <location>
        <begin position="395"/>
        <end position="402"/>
    </location>
</feature>
<feature type="strand" evidence="38">
    <location>
        <begin position="405"/>
        <end position="411"/>
    </location>
</feature>
<feature type="strand" evidence="38">
    <location>
        <begin position="419"/>
        <end position="423"/>
    </location>
</feature>
<feature type="strand" evidence="36">
    <location>
        <begin position="427"/>
        <end position="429"/>
    </location>
</feature>
<feature type="strand" evidence="38">
    <location>
        <begin position="434"/>
        <end position="438"/>
    </location>
</feature>
<feature type="strand" evidence="38">
    <location>
        <begin position="444"/>
        <end position="451"/>
    </location>
</feature>
<feature type="strand" evidence="36">
    <location>
        <begin position="452"/>
        <end position="454"/>
    </location>
</feature>
<feature type="strand" evidence="38">
    <location>
        <begin position="456"/>
        <end position="463"/>
    </location>
</feature>
<feature type="strand" evidence="36">
    <location>
        <begin position="467"/>
        <end position="472"/>
    </location>
</feature>
<feature type="strand" evidence="38">
    <location>
        <begin position="479"/>
        <end position="484"/>
    </location>
</feature>
<feature type="strand" evidence="38">
    <location>
        <begin position="489"/>
        <end position="491"/>
    </location>
</feature>
<feature type="strand" evidence="38">
    <location>
        <begin position="496"/>
        <end position="501"/>
    </location>
</feature>
<feature type="strand" evidence="38">
    <location>
        <begin position="506"/>
        <end position="512"/>
    </location>
</feature>
<feature type="strand" evidence="38">
    <location>
        <begin position="517"/>
        <end position="520"/>
    </location>
</feature>
<feature type="strand" evidence="36">
    <location>
        <begin position="523"/>
        <end position="525"/>
    </location>
</feature>
<feature type="strand" evidence="38">
    <location>
        <begin position="527"/>
        <end position="532"/>
    </location>
</feature>
<feature type="strand" evidence="38">
    <location>
        <begin position="537"/>
        <end position="544"/>
    </location>
</feature>
<feature type="strand" evidence="38">
    <location>
        <begin position="547"/>
        <end position="553"/>
    </location>
</feature>
<feature type="turn" evidence="38">
    <location>
        <begin position="554"/>
        <end position="556"/>
    </location>
</feature>
<feature type="strand" evidence="38">
    <location>
        <begin position="558"/>
        <end position="560"/>
    </location>
</feature>
<feature type="strand" evidence="38">
    <location>
        <begin position="562"/>
        <end position="566"/>
    </location>
</feature>
<feature type="strand" evidence="35">
    <location>
        <begin position="568"/>
        <end position="570"/>
    </location>
</feature>
<feature type="strand" evidence="38">
    <location>
        <begin position="573"/>
        <end position="578"/>
    </location>
</feature>
<feature type="strand" evidence="38">
    <location>
        <begin position="582"/>
        <end position="589"/>
    </location>
</feature>
<feature type="strand" evidence="36">
    <location>
        <begin position="590"/>
        <end position="592"/>
    </location>
</feature>
<feature type="strand" evidence="38">
    <location>
        <begin position="594"/>
        <end position="599"/>
    </location>
</feature>
<feature type="helix" evidence="38">
    <location>
        <begin position="601"/>
        <end position="604"/>
    </location>
</feature>
<feature type="helix" evidence="38">
    <location>
        <begin position="610"/>
        <end position="620"/>
    </location>
</feature>
<feature type="modified residue" description="Phosphoserine" evidence="27 29">
    <location sequence="Q13409-2">
        <position position="73"/>
    </location>
</feature>
<feature type="modified residue" description="Phosphoserine" evidence="28">
    <location sequence="Q13409-2">
        <position position="81"/>
    </location>
</feature>
<feature type="modified residue" description="Phosphoserine" evidence="33">
    <location sequence="Q13409-2">
        <position position="84"/>
    </location>
</feature>
<feature type="modified residue" description="Phosphoserine" evidence="27 29">
    <location sequence="Q13409-3">
        <position position="73"/>
    </location>
</feature>
<feature type="modified residue" description="Phosphoserine" evidence="28">
    <location sequence="Q13409-3">
        <position position="81"/>
    </location>
</feature>
<feature type="modified residue" description="Phosphoserine" evidence="33">
    <location sequence="Q13409-3">
        <position position="84"/>
    </location>
</feature>
<feature type="modified residue" description="Phosphoserine" evidence="27 29">
    <location sequence="Q13409-6">
        <position position="73"/>
    </location>
</feature>
<feature type="modified residue" description="Phosphoserine" evidence="28">
    <location sequence="Q13409-6">
        <position position="81"/>
    </location>
</feature>
<feature type="modified residue" description="Phosphoserine" evidence="33">
    <location sequence="Q13409-6">
        <position position="84"/>
    </location>
</feature>
<gene>
    <name evidence="17" type="primary">DYNC1I2</name>
    <name type="synonym">DNCI2</name>
    <name type="synonym">DNCIC2</name>
</gene>
<protein>
    <recommendedName>
        <fullName>Cytoplasmic dynein 1 intermediate chain 2</fullName>
    </recommendedName>
    <alternativeName>
        <fullName>Cytoplasmic dynein intermediate chain 2</fullName>
    </alternativeName>
    <alternativeName>
        <fullName>Dynein intermediate chain 2, cytosolic</fullName>
        <shortName>DH IC-2</shortName>
    </alternativeName>
</protein>
<proteinExistence type="evidence at protein level"/>
<accession>Q13409</accession>
<accession>B7ZA04</accession>
<accession>D3DPD4</accession>
<accession>D3DPD5</accession>
<accession>D3DPD6</accession>
<accession>Q32LY9</accession>
<accession>Q53S84</accession>
<accession>Q5BJF8</accession>
<accession>Q7Z4X1</accession>
<accession>Q96NG7</accession>
<accession>Q96S87</accession>
<accession>Q9BXZ5</accession>
<accession>Q9NT58</accession>
<organism>
    <name type="scientific">Homo sapiens</name>
    <name type="common">Human</name>
    <dbReference type="NCBI Taxonomy" id="9606"/>
    <lineage>
        <taxon>Eukaryota</taxon>
        <taxon>Metazoa</taxon>
        <taxon>Chordata</taxon>
        <taxon>Craniata</taxon>
        <taxon>Vertebrata</taxon>
        <taxon>Euteleostomi</taxon>
        <taxon>Mammalia</taxon>
        <taxon>Eutheria</taxon>
        <taxon>Euarchontoglires</taxon>
        <taxon>Primates</taxon>
        <taxon>Haplorrhini</taxon>
        <taxon>Catarrhini</taxon>
        <taxon>Hominidae</taxon>
        <taxon>Homo</taxon>
    </lineage>
</organism>
<comment type="function">
    <text evidence="2 7">Acts as one of several non-catalytic accessory components of the cytoplasmic dynein 1 complex that are thought to be involved in linking dynein to cargos and to adapter proteins that regulate dynein function (PubMed:31079899). Cytoplasmic dynein 1 acts as a motor for the intracellular retrograde motility of vesicles and organelles along microtubules (PubMed:31079899). The intermediate chains mediate the binding of dynein to dynactin via its 150 kDa component (p150-glued) DCTN1 (By similarity). Involved in membrane-transport, such as Golgi apparatus, late endosomes and lysosomes (By similarity).</text>
</comment>
<comment type="subunit">
    <text evidence="1 2 5 6 8">Homodimer. The cytoplasmic dynein 1 complex consists of two catalytic heavy chains (HCs) and a number of non-catalytic subunits presented by intermediate chains (ICs), light intermediate chains (LICs) and light chains (LCs); the composition seems to vary in respect to the IC, LIC and LC composition. The heavy chain homodimer serves as a scaffold for the probable homodimeric assembly of the respective non-catalytic subunits. The ICs and LICs bind directly to the HC dimer and the LCs assemble on the IC dimer (PubMed:29420470, PubMed:36071160). Interacts with DYNLT3 (By similarity). Interacts with DYNLT1 (PubMed:27502274). Interacts (dephosphorylated at Ser-90) with DCTN1 (By similarity). Interacts with BICD2. Interacts with SPEF2 (By similarity). Interacts with CFAP61 (By similarity).</text>
</comment>
<comment type="subunit">
    <text evidence="4">(Microbial infection) Interacts with human adenovirus 5 hexon protein; this interaction probably allows virus intracellular transport.</text>
</comment>
<comment type="interaction">
    <interactant intactId="EBI-742998">
        <id>Q13409</id>
    </interactant>
    <interactant intactId="EBI-372128">
        <id>Q9NP97</id>
        <label>DYNLRB1</label>
    </interactant>
    <organismsDiffer>false</organismsDiffer>
    <experiments>6</experiments>
</comment>
<comment type="interaction">
    <interactant intactId="EBI-742998">
        <id>Q13409</id>
    </interactant>
    <interactant intactId="EBI-743027">
        <id>P51808</id>
        <label>DYNLT3</label>
    </interactant>
    <organismsDiffer>false</organismsDiffer>
    <experiments>4</experiments>
</comment>
<comment type="interaction">
    <interactant intactId="EBI-12094038">
        <id>Q13409-3</id>
    </interactant>
    <interactant intactId="EBI-1176455">
        <id>P63172</id>
        <label>DYNLT1</label>
    </interactant>
    <organismsDiffer>false</organismsDiffer>
    <experiments>3</experiments>
</comment>
<comment type="interaction">
    <interactant intactId="EBI-12094038">
        <id>Q13409-3</id>
    </interactant>
    <interactant intactId="EBI-743027">
        <id>P51808</id>
        <label>DYNLT3</label>
    </interactant>
    <organismsDiffer>false</organismsDiffer>
    <experiments>3</experiments>
</comment>
<comment type="interaction">
    <interactant intactId="EBI-12094038">
        <id>Q13409-3</id>
    </interactant>
    <interactant intactId="EBI-10172876">
        <id>Q7Z6G3-2</id>
        <label>NECAB2</label>
    </interactant>
    <organismsDiffer>false</organismsDiffer>
    <experiments>3</experiments>
</comment>
<comment type="interaction">
    <interactant intactId="EBI-12094038">
        <id>Q13409-3</id>
    </interactant>
    <interactant intactId="EBI-745426">
        <id>Q13136</id>
        <label>PPFIA1</label>
    </interactant>
    <organismsDiffer>false</organismsDiffer>
    <experiments>3</experiments>
</comment>
<comment type="subcellular location">
    <subcellularLocation>
        <location evidence="16">Cytoplasm</location>
        <location evidence="16">Cytoskeleton</location>
    </subcellularLocation>
    <subcellularLocation>
        <location evidence="1">Cytoplasm</location>
    </subcellularLocation>
    <text evidence="1">Detected in the cytoplasm of pachytene spermatocytes. Localizes to the manchette in elongating spermatids.</text>
</comment>
<comment type="alternative products">
    <event type="alternative splicing"/>
    <isoform>
        <id>Q13409-1</id>
        <name>2A</name>
        <sequence type="displayed"/>
    </isoform>
    <isoform>
        <id>Q13409-2</id>
        <name>2B</name>
        <sequence type="described" ref="VSP_001336"/>
    </isoform>
    <isoform>
        <id>Q13409-3</id>
        <name>2C</name>
        <sequence type="described" ref="VSP_001336 VSP_001337"/>
    </isoform>
    <isoform>
        <id>Q13409-5</id>
        <name>2E</name>
        <sequence type="described" ref="VSP_023011"/>
    </isoform>
    <isoform>
        <id>Q13409-6</id>
        <name>2F</name>
        <sequence type="described" ref="VSP_001336 VSP_001337 VSP_023011"/>
    </isoform>
    <isoform>
        <id>Q13409-7</id>
        <name>3</name>
        <sequence type="described" ref="VSP_054377 VSP_001337"/>
    </isoform>
</comment>
<comment type="PTM">
    <text evidence="2">The phosphorylation status of Ser-90 appears to be involved in dynactin-dependent target binding.</text>
</comment>
<comment type="PTM">
    <text evidence="1">Pyrophosphorylation by 5-diphosphoinositol pentakisphosphate (5-IP7) promotes interaction with DCTN1. Serine pyrophosphorylation is achieved by Mg(2+)-dependent, but enzyme independent transfer of a beta-phosphate from a inositol pyrophosphate to a pre-phosphorylated serine residue.</text>
</comment>
<comment type="disease" evidence="7">
    <disease id="DI-05606">
        <name>Neurodevelopmental disorder with microcephaly and structural brain anomalies</name>
        <acronym>NEDMIBA</acronym>
        <description>An autosomal recessive neurodevelopmental disorder characterized by global developmental delay, severe intellectual disability, microcephaly, dysmorphic facial features, and cerebral malformations including simplification of cerebral gyration, agenesis of the corpus callosum, and brainstem and white matter hypoplasia.</description>
        <dbReference type="MIM" id="618492"/>
    </disease>
    <text>The disease may be caused by variants affecting the gene represented in this entry.</text>
</comment>
<comment type="similarity">
    <text evidence="15">Belongs to the dynein intermediate chain family.</text>
</comment>
<comment type="sequence caution" evidence="15">
    <conflict type="miscellaneous discrepancy">
        <sequence resource="EMBL-CDS" id="AAA89166"/>
    </conflict>
    <text>Unlikely isoform. Several sequence problems.</text>
</comment>
<sequence length="638" mass="71457">MSDKSELKAELERKKQRLAQIREEKKRKEEERKKKETDQKKEAVAPVQEESDLEKKRREAEALLQSMGLTPESPIVFSEYWVPPPMSPSSKSVSTPSEAGSQDSGDGAVGSRTLHWDTDPSVLQLHSDSDLGRGPIKLGMAKITQVDFPPREIVTYTKETQTPVMAQPKEDEEEDDDVVAPKPPIEPEEEKTLKKDEENDSKAPPHELTEEEKQQILHSEEFLSFFDHSTRIVERALSEQINIFFDYSGRDLEDKEGEIQAGAKLSLNRQFFDERWSKHRVVSCLDWSSQYPELLVASYNNNEDAPHEPDGVALVWNMKYKKTTPEYVFHCQSAVMSATFAKFHPNLVVGGTYSGQIVLWDNRSNKRTPVQRTPLSAAAHTHPVYCVNVVGTQNAHNLISISTDGKICSWSLDMLSHPQDSMELVHKQSKAVAVTSMSFPVGDVNNFVVGSEEGSVYTACRHGSKAGISEMFEGHQGPITGIHCHAAVGAVDFSHLFVTSSFDWTVKLWTTKNNKPLYSFEDNADYVYDVMWSPTHPALFACVDGMGRLDLWNLNNDTEVPTASISVEGNPALNRVRWTHSGREIAVGDSEGQIVIYDVGEQIAVPRNDEWARFGRTLAEINANRADAEEEAATRIPA</sequence>